<protein>
    <recommendedName>
        <fullName>Pyruvate kinase</fullName>
        <shortName>PK</shortName>
        <ecNumber>2.7.1.40</ecNumber>
    </recommendedName>
</protein>
<dbReference type="EC" id="2.7.1.40"/>
<dbReference type="EMBL" id="AE013218">
    <property type="protein sequence ID" value="AAM67865.1"/>
    <property type="molecule type" value="Genomic_DNA"/>
</dbReference>
<dbReference type="RefSeq" id="WP_011053832.1">
    <property type="nucleotide sequence ID" value="NC_004061.1"/>
</dbReference>
<dbReference type="SMR" id="Q8K9M3"/>
<dbReference type="STRING" id="198804.BUsg_311"/>
<dbReference type="GeneID" id="93003780"/>
<dbReference type="KEGG" id="bas:BUsg_311"/>
<dbReference type="eggNOG" id="COG0469">
    <property type="taxonomic scope" value="Bacteria"/>
</dbReference>
<dbReference type="HOGENOM" id="CLU_015439_8_0_6"/>
<dbReference type="UniPathway" id="UPA00109">
    <property type="reaction ID" value="UER00188"/>
</dbReference>
<dbReference type="Proteomes" id="UP000000416">
    <property type="component" value="Chromosome"/>
</dbReference>
<dbReference type="GO" id="GO:0005524">
    <property type="term" value="F:ATP binding"/>
    <property type="evidence" value="ECO:0007669"/>
    <property type="project" value="UniProtKB-KW"/>
</dbReference>
<dbReference type="GO" id="GO:0016301">
    <property type="term" value="F:kinase activity"/>
    <property type="evidence" value="ECO:0007669"/>
    <property type="project" value="UniProtKB-KW"/>
</dbReference>
<dbReference type="GO" id="GO:0000287">
    <property type="term" value="F:magnesium ion binding"/>
    <property type="evidence" value="ECO:0007669"/>
    <property type="project" value="InterPro"/>
</dbReference>
<dbReference type="GO" id="GO:0030955">
    <property type="term" value="F:potassium ion binding"/>
    <property type="evidence" value="ECO:0007669"/>
    <property type="project" value="InterPro"/>
</dbReference>
<dbReference type="GO" id="GO:0004743">
    <property type="term" value="F:pyruvate kinase activity"/>
    <property type="evidence" value="ECO:0007669"/>
    <property type="project" value="UniProtKB-EC"/>
</dbReference>
<dbReference type="FunFam" id="2.40.33.10:FF:000002">
    <property type="entry name" value="Pyruvate kinase"/>
    <property type="match status" value="1"/>
</dbReference>
<dbReference type="FunFam" id="3.40.1380.20:FF:000004">
    <property type="entry name" value="Pyruvate kinase"/>
    <property type="match status" value="1"/>
</dbReference>
<dbReference type="Gene3D" id="3.20.20.60">
    <property type="entry name" value="Phosphoenolpyruvate-binding domains"/>
    <property type="match status" value="1"/>
</dbReference>
<dbReference type="Gene3D" id="2.40.33.10">
    <property type="entry name" value="PK beta-barrel domain-like"/>
    <property type="match status" value="1"/>
</dbReference>
<dbReference type="Gene3D" id="3.40.1380.20">
    <property type="entry name" value="Pyruvate kinase, C-terminal domain"/>
    <property type="match status" value="1"/>
</dbReference>
<dbReference type="InterPro" id="IPR001697">
    <property type="entry name" value="Pyr_Knase"/>
</dbReference>
<dbReference type="InterPro" id="IPR015813">
    <property type="entry name" value="Pyrv/PenolPyrv_kinase-like_dom"/>
</dbReference>
<dbReference type="InterPro" id="IPR040442">
    <property type="entry name" value="Pyrv_kinase-like_dom_sf"/>
</dbReference>
<dbReference type="InterPro" id="IPR011037">
    <property type="entry name" value="Pyrv_Knase-like_insert_dom_sf"/>
</dbReference>
<dbReference type="InterPro" id="IPR018209">
    <property type="entry name" value="Pyrv_Knase_AS"/>
</dbReference>
<dbReference type="InterPro" id="IPR015793">
    <property type="entry name" value="Pyrv_Knase_brl"/>
</dbReference>
<dbReference type="InterPro" id="IPR015795">
    <property type="entry name" value="Pyrv_Knase_C"/>
</dbReference>
<dbReference type="InterPro" id="IPR036918">
    <property type="entry name" value="Pyrv_Knase_C_sf"/>
</dbReference>
<dbReference type="InterPro" id="IPR015806">
    <property type="entry name" value="Pyrv_Knase_insert_dom_sf"/>
</dbReference>
<dbReference type="NCBIfam" id="NF004491">
    <property type="entry name" value="PRK05826.1"/>
    <property type="match status" value="1"/>
</dbReference>
<dbReference type="NCBIfam" id="TIGR01064">
    <property type="entry name" value="pyruv_kin"/>
    <property type="match status" value="1"/>
</dbReference>
<dbReference type="PANTHER" id="PTHR11817">
    <property type="entry name" value="PYRUVATE KINASE"/>
    <property type="match status" value="1"/>
</dbReference>
<dbReference type="Pfam" id="PF00224">
    <property type="entry name" value="PK"/>
    <property type="match status" value="1"/>
</dbReference>
<dbReference type="Pfam" id="PF02887">
    <property type="entry name" value="PK_C"/>
    <property type="match status" value="1"/>
</dbReference>
<dbReference type="PRINTS" id="PR01050">
    <property type="entry name" value="PYRUVTKNASE"/>
</dbReference>
<dbReference type="SUPFAM" id="SSF51621">
    <property type="entry name" value="Phosphoenolpyruvate/pyruvate domain"/>
    <property type="match status" value="1"/>
</dbReference>
<dbReference type="SUPFAM" id="SSF50800">
    <property type="entry name" value="PK beta-barrel domain-like"/>
    <property type="match status" value="1"/>
</dbReference>
<dbReference type="SUPFAM" id="SSF52935">
    <property type="entry name" value="PK C-terminal domain-like"/>
    <property type="match status" value="1"/>
</dbReference>
<dbReference type="PROSITE" id="PS00110">
    <property type="entry name" value="PYRUVATE_KINASE"/>
    <property type="match status" value="1"/>
</dbReference>
<gene>
    <name type="primary">pykA</name>
    <name type="ordered locus">BUsg_311</name>
</gene>
<accession>Q8K9M3</accession>
<feature type="chain" id="PRO_0000112059" description="Pyruvate kinase">
    <location>
        <begin position="1"/>
        <end position="481"/>
    </location>
</feature>
<feature type="binding site" evidence="1">
    <location>
        <position position="36"/>
    </location>
    <ligand>
        <name>substrate</name>
    </ligand>
</feature>
<feature type="binding site" evidence="2">
    <location>
        <begin position="38"/>
        <end position="41"/>
    </location>
    <ligand>
        <name>ATP</name>
        <dbReference type="ChEBI" id="CHEBI:30616"/>
    </ligand>
</feature>
<feature type="binding site" evidence="1">
    <location>
        <position position="38"/>
    </location>
    <ligand>
        <name>K(+)</name>
        <dbReference type="ChEBI" id="CHEBI:29103"/>
    </ligand>
</feature>
<feature type="binding site" evidence="1">
    <location>
        <position position="40"/>
    </location>
    <ligand>
        <name>K(+)</name>
        <dbReference type="ChEBI" id="CHEBI:29103"/>
    </ligand>
</feature>
<feature type="binding site" evidence="1">
    <location>
        <position position="70"/>
    </location>
    <ligand>
        <name>K(+)</name>
        <dbReference type="ChEBI" id="CHEBI:29103"/>
    </ligand>
</feature>
<feature type="binding site" evidence="2">
    <location>
        <position position="77"/>
    </location>
    <ligand>
        <name>ATP</name>
        <dbReference type="ChEBI" id="CHEBI:30616"/>
    </ligand>
</feature>
<feature type="binding site" evidence="2">
    <location>
        <position position="160"/>
    </location>
    <ligand>
        <name>ATP</name>
        <dbReference type="ChEBI" id="CHEBI:30616"/>
    </ligand>
</feature>
<feature type="binding site" evidence="1">
    <location>
        <position position="225"/>
    </location>
    <ligand>
        <name>Mg(2+)</name>
        <dbReference type="ChEBI" id="CHEBI:18420"/>
    </ligand>
</feature>
<feature type="binding site" evidence="1">
    <location>
        <position position="251"/>
    </location>
    <ligand>
        <name>substrate</name>
    </ligand>
</feature>
<feature type="binding site" evidence="1">
    <location>
        <position position="252"/>
    </location>
    <ligand>
        <name>Mg(2+)</name>
        <dbReference type="ChEBI" id="CHEBI:18420"/>
    </ligand>
</feature>
<feature type="binding site" evidence="1">
    <location>
        <position position="252"/>
    </location>
    <ligand>
        <name>substrate</name>
    </ligand>
</feature>
<feature type="binding site" evidence="1">
    <location>
        <position position="284"/>
    </location>
    <ligand>
        <name>substrate</name>
    </ligand>
</feature>
<feature type="site" description="Transition state stabilizer" evidence="1">
    <location>
        <position position="223"/>
    </location>
</feature>
<comment type="catalytic activity">
    <reaction>
        <text>pyruvate + ATP = phosphoenolpyruvate + ADP + H(+)</text>
        <dbReference type="Rhea" id="RHEA:18157"/>
        <dbReference type="ChEBI" id="CHEBI:15361"/>
        <dbReference type="ChEBI" id="CHEBI:15378"/>
        <dbReference type="ChEBI" id="CHEBI:30616"/>
        <dbReference type="ChEBI" id="CHEBI:58702"/>
        <dbReference type="ChEBI" id="CHEBI:456216"/>
        <dbReference type="EC" id="2.7.1.40"/>
    </reaction>
</comment>
<comment type="cofactor">
    <cofactor evidence="1">
        <name>Mg(2+)</name>
        <dbReference type="ChEBI" id="CHEBI:18420"/>
    </cofactor>
</comment>
<comment type="cofactor">
    <cofactor evidence="1">
        <name>K(+)</name>
        <dbReference type="ChEBI" id="CHEBI:29103"/>
    </cofactor>
</comment>
<comment type="activity regulation">
    <text evidence="1">Allosterically activated by AMP and by several sugar phosphates. Belongs to type II PK (By similarity).</text>
</comment>
<comment type="pathway">
    <text>Carbohydrate degradation; glycolysis; pyruvate from D-glyceraldehyde 3-phosphate: step 5/5.</text>
</comment>
<comment type="subunit">
    <text evidence="1">Homotetramer.</text>
</comment>
<comment type="similarity">
    <text evidence="3">Belongs to the pyruvate kinase family.</text>
</comment>
<reference key="1">
    <citation type="journal article" date="2002" name="Science">
        <title>50 million years of genomic stasis in endosymbiotic bacteria.</title>
        <authorList>
            <person name="Tamas I."/>
            <person name="Klasson L."/>
            <person name="Canbaeck B."/>
            <person name="Naeslund A.K."/>
            <person name="Eriksson A.-S."/>
            <person name="Wernegreen J.J."/>
            <person name="Sandstroem J.P."/>
            <person name="Moran N.A."/>
            <person name="Andersson S.G.E."/>
        </authorList>
    </citation>
    <scope>NUCLEOTIDE SEQUENCE [LARGE SCALE GENOMIC DNA]</scope>
    <source>
        <strain>Sg</strain>
    </source>
</reference>
<proteinExistence type="inferred from homology"/>
<evidence type="ECO:0000250" key="1"/>
<evidence type="ECO:0000250" key="2">
    <source>
        <dbReference type="UniProtKB" id="P14618"/>
    </source>
</evidence>
<evidence type="ECO:0000305" key="3"/>
<organism>
    <name type="scientific">Buchnera aphidicola subsp. Schizaphis graminum (strain Sg)</name>
    <dbReference type="NCBI Taxonomy" id="198804"/>
    <lineage>
        <taxon>Bacteria</taxon>
        <taxon>Pseudomonadati</taxon>
        <taxon>Pseudomonadota</taxon>
        <taxon>Gammaproteobacteria</taxon>
        <taxon>Enterobacterales</taxon>
        <taxon>Erwiniaceae</taxon>
        <taxon>Buchnera</taxon>
    </lineage>
</organism>
<sequence>MLNRVRRTKIVATLGPSTDKANNLEKIILSGANVLRLNFSHGSSEEHKKRAKKAKEIMFKLNCHIALLGDLQGPKIRISKFKKNSIFLKVNDVFILDANLNEKNGNNERVGIDYKKLPNDLNVNDILLLDDGRIQLKVIKIEKCAIFTKVIIGGILSNNKGINKLGGGLSADALTEKDKKDIILASEIDVDYLAVSFPRCADDLIKARELLKKSGSNAQIIAKIERAEAVFDQNAIENIILSSDAIMIARGDLGVEIGDAELVGIQKKLIRTARKLNKVAITATQMMESMILNPLPTRAEVMDVANAVLDGSDAVMLSAETASGKYPSETVISMAKVCKGAEKVPSINVSRHRLNVEFQSIEEAIAMSSMYAANHLKGITAIITMTESGKTALMTSRITSGLPIFALSKHKKTLNLTALYRGVIPIYFDSDKDGVEAANEAIILLCKKKFLFNNDLVIVTQGDIMGKIGKTNTSRILRVTY</sequence>
<name>KPYK_BUCAP</name>
<keyword id="KW-0021">Allosteric enzyme</keyword>
<keyword id="KW-0067">ATP-binding</keyword>
<keyword id="KW-0324">Glycolysis</keyword>
<keyword id="KW-0418">Kinase</keyword>
<keyword id="KW-0460">Magnesium</keyword>
<keyword id="KW-0479">Metal-binding</keyword>
<keyword id="KW-0547">Nucleotide-binding</keyword>
<keyword id="KW-0630">Potassium</keyword>
<keyword id="KW-0670">Pyruvate</keyword>
<keyword id="KW-0808">Transferase</keyword>